<sequence>MSASGPANYEYVVARIRHRRAGLFGDDEYRKLLRMGTGEIARFMEDSTYKDAVDSLASRHRGMDLVEYALNEGLAAEFDALLSWSEGRLYDQLAKYLRKFDAWNVKTVFRGLYSHADTDAIRADLVDAGEFDAAFLDELLSADSVETVVDALSGTIFDTYLEPAFADYEDEDSLVPLENAVDRAYYENLNPSQPATAAQDSPEALYAEFLTAEIDFRNARNALRLARSGVSVDPAAYFIEGGTLFEASEMTTLVERQSDLVSRIQDSTYGDELSTALTALEESDSLIGFEHALDRALLSYSDHLSYVYPTSVCPVLAYVLAKEREVDNIRAIARGREAGMSEDEIQAELVML</sequence>
<gene>
    <name evidence="1" type="primary">atpC</name>
    <name type="ordered locus">VNG_2141G</name>
</gene>
<accession>Q9HNE1</accession>
<name>AATC_HALSA</name>
<proteinExistence type="inferred from homology"/>
<reference key="1">
    <citation type="journal article" date="2000" name="Proc. Natl. Acad. Sci. U.S.A.">
        <title>Genome sequence of Halobacterium species NRC-1.</title>
        <authorList>
            <person name="Ng W.V."/>
            <person name="Kennedy S.P."/>
            <person name="Mahairas G.G."/>
            <person name="Berquist B."/>
            <person name="Pan M."/>
            <person name="Shukla H.D."/>
            <person name="Lasky S.R."/>
            <person name="Baliga N.S."/>
            <person name="Thorsson V."/>
            <person name="Sbrogna J."/>
            <person name="Swartzell S."/>
            <person name="Weir D."/>
            <person name="Hall J."/>
            <person name="Dahl T.A."/>
            <person name="Welti R."/>
            <person name="Goo Y.A."/>
            <person name="Leithauser B."/>
            <person name="Keller K."/>
            <person name="Cruz R."/>
            <person name="Danson M.J."/>
            <person name="Hough D.W."/>
            <person name="Maddocks D.G."/>
            <person name="Jablonski P.E."/>
            <person name="Krebs M.P."/>
            <person name="Angevine C.M."/>
            <person name="Dale H."/>
            <person name="Isenbarger T.A."/>
            <person name="Peck R.F."/>
            <person name="Pohlschroder M."/>
            <person name="Spudich J.L."/>
            <person name="Jung K.-H."/>
            <person name="Alam M."/>
            <person name="Freitas T."/>
            <person name="Hou S."/>
            <person name="Daniels C.J."/>
            <person name="Dennis P.P."/>
            <person name="Omer A.D."/>
            <person name="Ebhardt H."/>
            <person name="Lowe T.M."/>
            <person name="Liang P."/>
            <person name="Riley M."/>
            <person name="Hood L."/>
            <person name="DasSarma S."/>
        </authorList>
    </citation>
    <scope>NUCLEOTIDE SEQUENCE [LARGE SCALE GENOMIC DNA]</scope>
    <source>
        <strain>ATCC 700922 / JCM 11081 / NRC-1</strain>
    </source>
</reference>
<feature type="chain" id="PRO_0000119363" description="A-type ATP synthase subunit C">
    <location>
        <begin position="1"/>
        <end position="352"/>
    </location>
</feature>
<protein>
    <recommendedName>
        <fullName evidence="1">A-type ATP synthase subunit C</fullName>
    </recommendedName>
</protein>
<evidence type="ECO:0000255" key="1">
    <source>
        <dbReference type="HAMAP-Rule" id="MF_00314"/>
    </source>
</evidence>
<organism>
    <name type="scientific">Halobacterium salinarum (strain ATCC 700922 / JCM 11081 / NRC-1)</name>
    <name type="common">Halobacterium halobium</name>
    <dbReference type="NCBI Taxonomy" id="64091"/>
    <lineage>
        <taxon>Archaea</taxon>
        <taxon>Methanobacteriati</taxon>
        <taxon>Methanobacteriota</taxon>
        <taxon>Stenosarchaea group</taxon>
        <taxon>Halobacteria</taxon>
        <taxon>Halobacteriales</taxon>
        <taxon>Halobacteriaceae</taxon>
        <taxon>Halobacterium</taxon>
        <taxon>Halobacterium salinarum NRC-34001</taxon>
    </lineage>
</organism>
<comment type="function">
    <text evidence="1">Component of the A-type ATP synthase that produces ATP from ADP in the presence of a proton gradient across the membrane.</text>
</comment>
<comment type="subunit">
    <text evidence="1">Has multiple subunits with at least A(3), B(3), C, D, E, F, H, I and proteolipid K(x).</text>
</comment>
<comment type="subcellular location">
    <subcellularLocation>
        <location evidence="1">Cell membrane</location>
        <topology evidence="1">Peripheral membrane protein</topology>
    </subcellularLocation>
</comment>
<comment type="similarity">
    <text evidence="1">Belongs to the V-ATPase V0D/AC39 subunit family.</text>
</comment>
<dbReference type="EMBL" id="AE004437">
    <property type="protein sequence ID" value="AAG20279.1"/>
    <property type="molecule type" value="Genomic_DNA"/>
</dbReference>
<dbReference type="PIR" id="C84364">
    <property type="entry name" value="C84364"/>
</dbReference>
<dbReference type="RefSeq" id="WP_010903581.1">
    <property type="nucleotide sequence ID" value="NC_002607.1"/>
</dbReference>
<dbReference type="SMR" id="Q9HNE1"/>
<dbReference type="STRING" id="64091.VNG_2141G"/>
<dbReference type="PaxDb" id="64091-VNG_2141G"/>
<dbReference type="KEGG" id="hal:VNG_2141G"/>
<dbReference type="PATRIC" id="fig|64091.14.peg.1639"/>
<dbReference type="HOGENOM" id="CLU_059311_0_1_2"/>
<dbReference type="InParanoid" id="Q9HNE1"/>
<dbReference type="OrthoDB" id="4272at2157"/>
<dbReference type="PhylomeDB" id="Q9HNE1"/>
<dbReference type="Proteomes" id="UP000000554">
    <property type="component" value="Chromosome"/>
</dbReference>
<dbReference type="GO" id="GO:0005886">
    <property type="term" value="C:plasma membrane"/>
    <property type="evidence" value="ECO:0007669"/>
    <property type="project" value="UniProtKB-SubCell"/>
</dbReference>
<dbReference type="GO" id="GO:0033179">
    <property type="term" value="C:proton-transporting V-type ATPase, V0 domain"/>
    <property type="evidence" value="ECO:0007669"/>
    <property type="project" value="InterPro"/>
</dbReference>
<dbReference type="GO" id="GO:0005524">
    <property type="term" value="F:ATP binding"/>
    <property type="evidence" value="ECO:0007669"/>
    <property type="project" value="UniProtKB-UniRule"/>
</dbReference>
<dbReference type="GO" id="GO:0046933">
    <property type="term" value="F:proton-transporting ATP synthase activity, rotational mechanism"/>
    <property type="evidence" value="ECO:0007669"/>
    <property type="project" value="UniProtKB-UniRule"/>
</dbReference>
<dbReference type="GO" id="GO:0046961">
    <property type="term" value="F:proton-transporting ATPase activity, rotational mechanism"/>
    <property type="evidence" value="ECO:0007669"/>
    <property type="project" value="InterPro"/>
</dbReference>
<dbReference type="GO" id="GO:0042777">
    <property type="term" value="P:proton motive force-driven plasma membrane ATP synthesis"/>
    <property type="evidence" value="ECO:0007669"/>
    <property type="project" value="UniProtKB-UniRule"/>
</dbReference>
<dbReference type="Gene3D" id="1.10.132.50">
    <property type="entry name" value="ATP synthase (C/AC39) subunit, domain 3"/>
    <property type="match status" value="1"/>
</dbReference>
<dbReference type="Gene3D" id="1.20.1690.10">
    <property type="entry name" value="V-type ATP synthase subunit C domain"/>
    <property type="match status" value="2"/>
</dbReference>
<dbReference type="HAMAP" id="MF_00314">
    <property type="entry name" value="ATP_synth_C_arch"/>
    <property type="match status" value="1"/>
</dbReference>
<dbReference type="InterPro" id="IPR036079">
    <property type="entry name" value="ATPase_csu/dsu_sf"/>
</dbReference>
<dbReference type="InterPro" id="IPR014272">
    <property type="entry name" value="ATPase_V0-cplx_csu"/>
</dbReference>
<dbReference type="InterPro" id="IPR002843">
    <property type="entry name" value="ATPase_V0-cplx_csu/dsu"/>
</dbReference>
<dbReference type="InterPro" id="IPR050873">
    <property type="entry name" value="V-ATPase_V0D/AC39_subunit"/>
</dbReference>
<dbReference type="InterPro" id="IPR035067">
    <property type="entry name" value="V-type_ATPase_csu/dsu"/>
</dbReference>
<dbReference type="InterPro" id="IPR044911">
    <property type="entry name" value="V-type_ATPase_csu/dsu_dom_3"/>
</dbReference>
<dbReference type="NCBIfam" id="TIGR02923">
    <property type="entry name" value="AhaC"/>
    <property type="match status" value="1"/>
</dbReference>
<dbReference type="NCBIfam" id="NF002265">
    <property type="entry name" value="PRK01198.1-1"/>
    <property type="match status" value="1"/>
</dbReference>
<dbReference type="PANTHER" id="PTHR38682">
    <property type="entry name" value="V-TYPE ATP SYNTHASE SUBUNIT C"/>
    <property type="match status" value="1"/>
</dbReference>
<dbReference type="PANTHER" id="PTHR38682:SF1">
    <property type="entry name" value="V-TYPE ATP SYNTHASE SUBUNIT C"/>
    <property type="match status" value="1"/>
</dbReference>
<dbReference type="Pfam" id="PF01992">
    <property type="entry name" value="vATP-synt_AC39"/>
    <property type="match status" value="1"/>
</dbReference>
<dbReference type="SUPFAM" id="SSF103486">
    <property type="entry name" value="V-type ATP synthase subunit C"/>
    <property type="match status" value="1"/>
</dbReference>
<keyword id="KW-0066">ATP synthesis</keyword>
<keyword id="KW-1003">Cell membrane</keyword>
<keyword id="KW-0375">Hydrogen ion transport</keyword>
<keyword id="KW-0406">Ion transport</keyword>
<keyword id="KW-0472">Membrane</keyword>
<keyword id="KW-1185">Reference proteome</keyword>
<keyword id="KW-0813">Transport</keyword>